<keyword id="KW-0378">Hydrolase</keyword>
<accession>A0L066</accession>
<name>APAH_SHESA</name>
<feature type="chain" id="PRO_1000012093" description="Bis(5'-nucleosyl)-tetraphosphatase, symmetrical">
    <location>
        <begin position="1"/>
        <end position="274"/>
    </location>
</feature>
<dbReference type="EC" id="3.6.1.41" evidence="1"/>
<dbReference type="EMBL" id="CP000469">
    <property type="protein sequence ID" value="ABK49435.1"/>
    <property type="molecule type" value="Genomic_DNA"/>
</dbReference>
<dbReference type="RefSeq" id="WP_011718032.1">
    <property type="nucleotide sequence ID" value="NC_008577.1"/>
</dbReference>
<dbReference type="SMR" id="A0L066"/>
<dbReference type="STRING" id="94122.Shewana3_3211"/>
<dbReference type="KEGG" id="shn:Shewana3_3211"/>
<dbReference type="eggNOG" id="COG0639">
    <property type="taxonomic scope" value="Bacteria"/>
</dbReference>
<dbReference type="HOGENOM" id="CLU_056184_2_0_6"/>
<dbReference type="OrthoDB" id="9807890at2"/>
<dbReference type="Proteomes" id="UP000002589">
    <property type="component" value="Chromosome"/>
</dbReference>
<dbReference type="GO" id="GO:0005737">
    <property type="term" value="C:cytoplasm"/>
    <property type="evidence" value="ECO:0007669"/>
    <property type="project" value="TreeGrafter"/>
</dbReference>
<dbReference type="GO" id="GO:0008803">
    <property type="term" value="F:bis(5'-nucleosyl)-tetraphosphatase (symmetrical) activity"/>
    <property type="evidence" value="ECO:0007669"/>
    <property type="project" value="UniProtKB-UniRule"/>
</dbReference>
<dbReference type="GO" id="GO:0016791">
    <property type="term" value="F:phosphatase activity"/>
    <property type="evidence" value="ECO:0007669"/>
    <property type="project" value="TreeGrafter"/>
</dbReference>
<dbReference type="GO" id="GO:0110154">
    <property type="term" value="P:RNA decapping"/>
    <property type="evidence" value="ECO:0007669"/>
    <property type="project" value="TreeGrafter"/>
</dbReference>
<dbReference type="CDD" id="cd07422">
    <property type="entry name" value="MPP_ApaH"/>
    <property type="match status" value="1"/>
</dbReference>
<dbReference type="Gene3D" id="3.60.21.10">
    <property type="match status" value="1"/>
</dbReference>
<dbReference type="HAMAP" id="MF_00199">
    <property type="entry name" value="ApaH"/>
    <property type="match status" value="1"/>
</dbReference>
<dbReference type="InterPro" id="IPR050126">
    <property type="entry name" value="Ap4A_hydrolase"/>
</dbReference>
<dbReference type="InterPro" id="IPR004617">
    <property type="entry name" value="ApaH"/>
</dbReference>
<dbReference type="InterPro" id="IPR004843">
    <property type="entry name" value="Calcineurin-like_PHP_ApaH"/>
</dbReference>
<dbReference type="InterPro" id="IPR029052">
    <property type="entry name" value="Metallo-depent_PP-like"/>
</dbReference>
<dbReference type="NCBIfam" id="TIGR00668">
    <property type="entry name" value="apaH"/>
    <property type="match status" value="1"/>
</dbReference>
<dbReference type="NCBIfam" id="NF001204">
    <property type="entry name" value="PRK00166.1"/>
    <property type="match status" value="1"/>
</dbReference>
<dbReference type="PANTHER" id="PTHR42850:SF11">
    <property type="entry name" value="BIS(5'-NUCLEOSYL)-TETRAPHOSPHATASE [SYMMETRICAL]"/>
    <property type="match status" value="1"/>
</dbReference>
<dbReference type="PANTHER" id="PTHR42850">
    <property type="entry name" value="METALLOPHOSPHOESTERASE"/>
    <property type="match status" value="1"/>
</dbReference>
<dbReference type="Pfam" id="PF00149">
    <property type="entry name" value="Metallophos"/>
    <property type="match status" value="1"/>
</dbReference>
<dbReference type="PIRSF" id="PIRSF000903">
    <property type="entry name" value="B5n-ttraPtase_sm"/>
    <property type="match status" value="1"/>
</dbReference>
<dbReference type="SUPFAM" id="SSF56300">
    <property type="entry name" value="Metallo-dependent phosphatases"/>
    <property type="match status" value="1"/>
</dbReference>
<protein>
    <recommendedName>
        <fullName evidence="1">Bis(5'-nucleosyl)-tetraphosphatase, symmetrical</fullName>
        <ecNumber evidence="1">3.6.1.41</ecNumber>
    </recommendedName>
    <alternativeName>
        <fullName evidence="1">Ap4A hydrolase</fullName>
    </alternativeName>
    <alternativeName>
        <fullName evidence="1">Diadenosine 5',5'''-P1,P4-tetraphosphate pyrophosphohydrolase</fullName>
    </alternativeName>
    <alternativeName>
        <fullName evidence="1">Diadenosine tetraphosphatase</fullName>
    </alternativeName>
</protein>
<proteinExistence type="inferred from homology"/>
<sequence>MAHYFVGDVQGCFAELQRLLAKVDFNPSCDELWAVGDLVARGPDSLATLRYFQSLGDAGKTVLGNHDLHLLALHGKLKRDKPSDNLTPLLNAPDIASLIDWLRQQPLMRELPEHKIIMTHAGVPPQWSLEVLRQESQLVSQALKQSDYLDALISQMYSDTAERWEPSAIGINRLRFCINALTRMRYLYVDGHLDFDCKQPPEDCTNPQLRPWFEFTSALRQSHTLVFGHWAALMGKVNDPKLKALDTGCCWGEYLTLWHLEKDQKITQKRLKKG</sequence>
<gene>
    <name evidence="1" type="primary">apaH</name>
    <name type="ordered locus">Shewana3_3211</name>
</gene>
<comment type="function">
    <text evidence="1">Hydrolyzes diadenosine 5',5'''-P1,P4-tetraphosphate to yield ADP.</text>
</comment>
<comment type="catalytic activity">
    <reaction evidence="1">
        <text>P(1),P(4)-bis(5'-adenosyl) tetraphosphate + H2O = 2 ADP + 2 H(+)</text>
        <dbReference type="Rhea" id="RHEA:24252"/>
        <dbReference type="ChEBI" id="CHEBI:15377"/>
        <dbReference type="ChEBI" id="CHEBI:15378"/>
        <dbReference type="ChEBI" id="CHEBI:58141"/>
        <dbReference type="ChEBI" id="CHEBI:456216"/>
        <dbReference type="EC" id="3.6.1.41"/>
    </reaction>
</comment>
<comment type="similarity">
    <text evidence="1">Belongs to the Ap4A hydrolase family.</text>
</comment>
<reference key="1">
    <citation type="submission" date="2006-09" db="EMBL/GenBank/DDBJ databases">
        <title>Complete sequence of chromosome 1 of Shewanella sp. ANA-3.</title>
        <authorList>
            <person name="Copeland A."/>
            <person name="Lucas S."/>
            <person name="Lapidus A."/>
            <person name="Barry K."/>
            <person name="Detter J.C."/>
            <person name="Glavina del Rio T."/>
            <person name="Hammon N."/>
            <person name="Israni S."/>
            <person name="Dalin E."/>
            <person name="Tice H."/>
            <person name="Pitluck S."/>
            <person name="Chertkov O."/>
            <person name="Brettin T."/>
            <person name="Bruce D."/>
            <person name="Han C."/>
            <person name="Tapia R."/>
            <person name="Gilna P."/>
            <person name="Schmutz J."/>
            <person name="Larimer F."/>
            <person name="Land M."/>
            <person name="Hauser L."/>
            <person name="Kyrpides N."/>
            <person name="Kim E."/>
            <person name="Newman D."/>
            <person name="Salticov C."/>
            <person name="Konstantinidis K."/>
            <person name="Klappenback J."/>
            <person name="Tiedje J."/>
            <person name="Richardson P."/>
        </authorList>
    </citation>
    <scope>NUCLEOTIDE SEQUENCE [LARGE SCALE GENOMIC DNA]</scope>
    <source>
        <strain>ANA-3</strain>
    </source>
</reference>
<organism>
    <name type="scientific">Shewanella sp. (strain ANA-3)</name>
    <dbReference type="NCBI Taxonomy" id="94122"/>
    <lineage>
        <taxon>Bacteria</taxon>
        <taxon>Pseudomonadati</taxon>
        <taxon>Pseudomonadota</taxon>
        <taxon>Gammaproteobacteria</taxon>
        <taxon>Alteromonadales</taxon>
        <taxon>Shewanellaceae</taxon>
        <taxon>Shewanella</taxon>
    </lineage>
</organism>
<evidence type="ECO:0000255" key="1">
    <source>
        <dbReference type="HAMAP-Rule" id="MF_00199"/>
    </source>
</evidence>